<name>PYRE_SALSV</name>
<evidence type="ECO:0000255" key="1">
    <source>
        <dbReference type="HAMAP-Rule" id="MF_01208"/>
    </source>
</evidence>
<protein>
    <recommendedName>
        <fullName evidence="1">Orotate phosphoribosyltransferase</fullName>
        <shortName evidence="1">OPRT</shortName>
        <shortName evidence="1">OPRTase</shortName>
        <ecNumber evidence="1">2.4.2.10</ecNumber>
    </recommendedName>
</protein>
<dbReference type="EC" id="2.4.2.10" evidence="1"/>
<dbReference type="EMBL" id="CP001127">
    <property type="protein sequence ID" value="ACF90821.1"/>
    <property type="molecule type" value="Genomic_DNA"/>
</dbReference>
<dbReference type="RefSeq" id="WP_000806167.1">
    <property type="nucleotide sequence ID" value="NC_011094.1"/>
</dbReference>
<dbReference type="SMR" id="B4TZY3"/>
<dbReference type="KEGG" id="sew:SeSA_A3932"/>
<dbReference type="HOGENOM" id="CLU_074878_0_1_6"/>
<dbReference type="UniPathway" id="UPA00070">
    <property type="reaction ID" value="UER00119"/>
</dbReference>
<dbReference type="Proteomes" id="UP000001865">
    <property type="component" value="Chromosome"/>
</dbReference>
<dbReference type="GO" id="GO:0005737">
    <property type="term" value="C:cytoplasm"/>
    <property type="evidence" value="ECO:0007669"/>
    <property type="project" value="TreeGrafter"/>
</dbReference>
<dbReference type="GO" id="GO:0000287">
    <property type="term" value="F:magnesium ion binding"/>
    <property type="evidence" value="ECO:0007669"/>
    <property type="project" value="UniProtKB-UniRule"/>
</dbReference>
<dbReference type="GO" id="GO:0004588">
    <property type="term" value="F:orotate phosphoribosyltransferase activity"/>
    <property type="evidence" value="ECO:0007669"/>
    <property type="project" value="UniProtKB-UniRule"/>
</dbReference>
<dbReference type="GO" id="GO:0006207">
    <property type="term" value="P:'de novo' pyrimidine nucleobase biosynthetic process"/>
    <property type="evidence" value="ECO:0007669"/>
    <property type="project" value="TreeGrafter"/>
</dbReference>
<dbReference type="GO" id="GO:0044205">
    <property type="term" value="P:'de novo' UMP biosynthetic process"/>
    <property type="evidence" value="ECO:0007669"/>
    <property type="project" value="UniProtKB-UniRule"/>
</dbReference>
<dbReference type="GO" id="GO:0046132">
    <property type="term" value="P:pyrimidine ribonucleoside biosynthetic process"/>
    <property type="evidence" value="ECO:0007669"/>
    <property type="project" value="TreeGrafter"/>
</dbReference>
<dbReference type="CDD" id="cd06223">
    <property type="entry name" value="PRTases_typeI"/>
    <property type="match status" value="1"/>
</dbReference>
<dbReference type="FunFam" id="3.40.50.2020:FF:000008">
    <property type="entry name" value="Orotate phosphoribosyltransferase"/>
    <property type="match status" value="1"/>
</dbReference>
<dbReference type="Gene3D" id="3.40.50.2020">
    <property type="match status" value="1"/>
</dbReference>
<dbReference type="HAMAP" id="MF_01208">
    <property type="entry name" value="PyrE"/>
    <property type="match status" value="1"/>
</dbReference>
<dbReference type="InterPro" id="IPR023031">
    <property type="entry name" value="OPRT"/>
</dbReference>
<dbReference type="InterPro" id="IPR004467">
    <property type="entry name" value="Or_phspho_trans_dom"/>
</dbReference>
<dbReference type="InterPro" id="IPR000836">
    <property type="entry name" value="PRibTrfase_dom"/>
</dbReference>
<dbReference type="InterPro" id="IPR029057">
    <property type="entry name" value="PRTase-like"/>
</dbReference>
<dbReference type="NCBIfam" id="TIGR00336">
    <property type="entry name" value="pyrE"/>
    <property type="match status" value="1"/>
</dbReference>
<dbReference type="PANTHER" id="PTHR46683">
    <property type="entry name" value="OROTATE PHOSPHORIBOSYLTRANSFERASE 1-RELATED"/>
    <property type="match status" value="1"/>
</dbReference>
<dbReference type="PANTHER" id="PTHR46683:SF1">
    <property type="entry name" value="OROTATE PHOSPHORIBOSYLTRANSFERASE 1-RELATED"/>
    <property type="match status" value="1"/>
</dbReference>
<dbReference type="Pfam" id="PF00156">
    <property type="entry name" value="Pribosyltran"/>
    <property type="match status" value="1"/>
</dbReference>
<dbReference type="SUPFAM" id="SSF53271">
    <property type="entry name" value="PRTase-like"/>
    <property type="match status" value="1"/>
</dbReference>
<dbReference type="PROSITE" id="PS00103">
    <property type="entry name" value="PUR_PYR_PR_TRANSFER"/>
    <property type="match status" value="1"/>
</dbReference>
<reference key="1">
    <citation type="journal article" date="2011" name="J. Bacteriol.">
        <title>Comparative genomics of 28 Salmonella enterica isolates: evidence for CRISPR-mediated adaptive sublineage evolution.</title>
        <authorList>
            <person name="Fricke W.F."/>
            <person name="Mammel M.K."/>
            <person name="McDermott P.F."/>
            <person name="Tartera C."/>
            <person name="White D.G."/>
            <person name="Leclerc J.E."/>
            <person name="Ravel J."/>
            <person name="Cebula T.A."/>
        </authorList>
    </citation>
    <scope>NUCLEOTIDE SEQUENCE [LARGE SCALE GENOMIC DNA]</scope>
    <source>
        <strain>CVM19633</strain>
    </source>
</reference>
<organism>
    <name type="scientific">Salmonella schwarzengrund (strain CVM19633)</name>
    <dbReference type="NCBI Taxonomy" id="439843"/>
    <lineage>
        <taxon>Bacteria</taxon>
        <taxon>Pseudomonadati</taxon>
        <taxon>Pseudomonadota</taxon>
        <taxon>Gammaproteobacteria</taxon>
        <taxon>Enterobacterales</taxon>
        <taxon>Enterobacteriaceae</taxon>
        <taxon>Salmonella</taxon>
    </lineage>
</organism>
<sequence length="213" mass="23562">MKPYQRQFIEFALNKQVLKFGEFTLKSGRKSPYFFNAGLFNTGRDLALLGRFYAEALVDSGIEFDLLFGPAYKGIPIATTTAVALAEHHDKDLPYCFNRKEAKDHGEGGSLVGSALQGRVMLVDDVITAGTAIRESMEIIQAHGATLAGVLISLDRQERGRGEISAIQEVERDYGCKVISIITLKDLIAYLEEKPDMAEHLAAVRAYREEFGV</sequence>
<accession>B4TZY3</accession>
<feature type="chain" id="PRO_1000138831" description="Orotate phosphoribosyltransferase">
    <location>
        <begin position="1"/>
        <end position="213"/>
    </location>
</feature>
<feature type="binding site" description="in other chain" evidence="1">
    <location>
        <position position="26"/>
    </location>
    <ligand>
        <name>5-phospho-alpha-D-ribose 1-diphosphate</name>
        <dbReference type="ChEBI" id="CHEBI:58017"/>
        <note>ligand shared between dimeric partners</note>
    </ligand>
</feature>
<feature type="binding site" evidence="1">
    <location>
        <begin position="34"/>
        <end position="35"/>
    </location>
    <ligand>
        <name>orotate</name>
        <dbReference type="ChEBI" id="CHEBI:30839"/>
    </ligand>
</feature>
<feature type="binding site" description="in other chain" evidence="1">
    <location>
        <begin position="72"/>
        <end position="73"/>
    </location>
    <ligand>
        <name>5-phospho-alpha-D-ribose 1-diphosphate</name>
        <dbReference type="ChEBI" id="CHEBI:58017"/>
        <note>ligand shared between dimeric partners</note>
    </ligand>
</feature>
<feature type="binding site" evidence="1">
    <location>
        <position position="99"/>
    </location>
    <ligand>
        <name>5-phospho-alpha-D-ribose 1-diphosphate</name>
        <dbReference type="ChEBI" id="CHEBI:58017"/>
        <note>ligand shared between dimeric partners</note>
    </ligand>
</feature>
<feature type="binding site" description="in other chain" evidence="1">
    <location>
        <position position="100"/>
    </location>
    <ligand>
        <name>5-phospho-alpha-D-ribose 1-diphosphate</name>
        <dbReference type="ChEBI" id="CHEBI:58017"/>
        <note>ligand shared between dimeric partners</note>
    </ligand>
</feature>
<feature type="binding site" evidence="1">
    <location>
        <position position="103"/>
    </location>
    <ligand>
        <name>5-phospho-alpha-D-ribose 1-diphosphate</name>
        <dbReference type="ChEBI" id="CHEBI:58017"/>
        <note>ligand shared between dimeric partners</note>
    </ligand>
</feature>
<feature type="binding site" evidence="1">
    <location>
        <position position="105"/>
    </location>
    <ligand>
        <name>5-phospho-alpha-D-ribose 1-diphosphate</name>
        <dbReference type="ChEBI" id="CHEBI:58017"/>
        <note>ligand shared between dimeric partners</note>
    </ligand>
</feature>
<feature type="binding site" description="in other chain" evidence="1">
    <location>
        <begin position="124"/>
        <end position="132"/>
    </location>
    <ligand>
        <name>5-phospho-alpha-D-ribose 1-diphosphate</name>
        <dbReference type="ChEBI" id="CHEBI:58017"/>
        <note>ligand shared between dimeric partners</note>
    </ligand>
</feature>
<feature type="binding site" evidence="1">
    <location>
        <position position="128"/>
    </location>
    <ligand>
        <name>orotate</name>
        <dbReference type="ChEBI" id="CHEBI:30839"/>
    </ligand>
</feature>
<feature type="binding site" evidence="1">
    <location>
        <position position="156"/>
    </location>
    <ligand>
        <name>orotate</name>
        <dbReference type="ChEBI" id="CHEBI:30839"/>
    </ligand>
</feature>
<proteinExistence type="inferred from homology"/>
<keyword id="KW-0328">Glycosyltransferase</keyword>
<keyword id="KW-0460">Magnesium</keyword>
<keyword id="KW-0665">Pyrimidine biosynthesis</keyword>
<keyword id="KW-0808">Transferase</keyword>
<gene>
    <name evidence="1" type="primary">pyrE</name>
    <name type="ordered locus">SeSA_A3932</name>
</gene>
<comment type="function">
    <text evidence="1">Catalyzes the transfer of a ribosyl phosphate group from 5-phosphoribose 1-diphosphate to orotate, leading to the formation of orotidine monophosphate (OMP).</text>
</comment>
<comment type="catalytic activity">
    <reaction evidence="1">
        <text>orotidine 5'-phosphate + diphosphate = orotate + 5-phospho-alpha-D-ribose 1-diphosphate</text>
        <dbReference type="Rhea" id="RHEA:10380"/>
        <dbReference type="ChEBI" id="CHEBI:30839"/>
        <dbReference type="ChEBI" id="CHEBI:33019"/>
        <dbReference type="ChEBI" id="CHEBI:57538"/>
        <dbReference type="ChEBI" id="CHEBI:58017"/>
        <dbReference type="EC" id="2.4.2.10"/>
    </reaction>
</comment>
<comment type="cofactor">
    <cofactor evidence="1">
        <name>Mg(2+)</name>
        <dbReference type="ChEBI" id="CHEBI:18420"/>
    </cofactor>
</comment>
<comment type="pathway">
    <text evidence="1">Pyrimidine metabolism; UMP biosynthesis via de novo pathway; UMP from orotate: step 1/2.</text>
</comment>
<comment type="subunit">
    <text evidence="1">Homodimer.</text>
</comment>
<comment type="similarity">
    <text evidence="1">Belongs to the purine/pyrimidine phosphoribosyltransferase family. PyrE subfamily.</text>
</comment>